<dbReference type="EMBL" id="U18997">
    <property type="protein sequence ID" value="AAA57992.1"/>
    <property type="status" value="ALT_INIT"/>
    <property type="molecule type" value="Genomic_DNA"/>
</dbReference>
<dbReference type="EMBL" id="U00096">
    <property type="protein sequence ID" value="AAC76223.2"/>
    <property type="molecule type" value="Genomic_DNA"/>
</dbReference>
<dbReference type="EMBL" id="AP009048">
    <property type="protein sequence ID" value="BAE77235.1"/>
    <property type="molecule type" value="Genomic_DNA"/>
</dbReference>
<dbReference type="RefSeq" id="NP_417658.4">
    <property type="nucleotide sequence ID" value="NC_000913.3"/>
</dbReference>
<dbReference type="RefSeq" id="WP_000004488.1">
    <property type="nucleotide sequence ID" value="NZ_SSZK01000007.1"/>
</dbReference>
<dbReference type="PDB" id="6XGY">
    <property type="method" value="X-ray"/>
    <property type="resolution" value="2.90 A"/>
    <property type="chains" value="B=2-97"/>
</dbReference>
<dbReference type="PDB" id="6XGZ">
    <property type="method" value="X-ray"/>
    <property type="resolution" value="2.60 A"/>
    <property type="chains" value="B/D/F/H=2-97"/>
</dbReference>
<dbReference type="PDB" id="6ZY2">
    <property type="method" value="EM"/>
    <property type="resolution" value="3.60 A"/>
    <property type="chains" value="B/C=1-97"/>
</dbReference>
<dbReference type="PDB" id="6ZY3">
    <property type="method" value="EM"/>
    <property type="resolution" value="3.30 A"/>
    <property type="chains" value="B/C=1-97"/>
</dbReference>
<dbReference type="PDB" id="6ZY4">
    <property type="method" value="EM"/>
    <property type="resolution" value="4.10 A"/>
    <property type="chains" value="B/C=1-97"/>
</dbReference>
<dbReference type="PDB" id="6ZY9">
    <property type="method" value="EM"/>
    <property type="resolution" value="3.30 A"/>
    <property type="chains" value="B/C=1-97"/>
</dbReference>
<dbReference type="PDB" id="7CGE">
    <property type="method" value="EM"/>
    <property type="resolution" value="2.90 A"/>
    <property type="chains" value="C/F=1-97"/>
</dbReference>
<dbReference type="PDB" id="7CGN">
    <property type="method" value="EM"/>
    <property type="resolution" value="4.30 A"/>
    <property type="chains" value="C/F=1-97"/>
</dbReference>
<dbReference type="PDB" id="7CH0">
    <property type="method" value="EM"/>
    <property type="resolution" value="3.70 A"/>
    <property type="chains" value="C/F=1-97"/>
</dbReference>
<dbReference type="PDB" id="7CH6">
    <property type="method" value="EM"/>
    <property type="resolution" value="3.40 A"/>
    <property type="chains" value="E/F=1-97"/>
</dbReference>
<dbReference type="PDB" id="7CH7">
    <property type="method" value="EM"/>
    <property type="resolution" value="3.90 A"/>
    <property type="chains" value="E/F=1-97"/>
</dbReference>
<dbReference type="PDBsum" id="6XGY"/>
<dbReference type="PDBsum" id="6XGZ"/>
<dbReference type="PDBsum" id="6ZY2"/>
<dbReference type="PDBsum" id="6ZY3"/>
<dbReference type="PDBsum" id="6ZY4"/>
<dbReference type="PDBsum" id="6ZY9"/>
<dbReference type="PDBsum" id="7CGE"/>
<dbReference type="PDBsum" id="7CGN"/>
<dbReference type="PDBsum" id="7CH0"/>
<dbReference type="PDBsum" id="7CH6"/>
<dbReference type="PDBsum" id="7CH7"/>
<dbReference type="EMDB" id="EMD-29041"/>
<dbReference type="EMDB" id="EMD-40162"/>
<dbReference type="SMR" id="P64602"/>
<dbReference type="BioGRID" id="4260758">
    <property type="interactions" value="428"/>
</dbReference>
<dbReference type="BioGRID" id="852263">
    <property type="interactions" value="2"/>
</dbReference>
<dbReference type="ComplexPortal" id="CPX-3464">
    <property type="entry name" value="MlaFEDB lipid transport complex"/>
</dbReference>
<dbReference type="DIP" id="DIP-47898N"/>
<dbReference type="FunCoup" id="P64602">
    <property type="interactions" value="225"/>
</dbReference>
<dbReference type="IntAct" id="P64602">
    <property type="interactions" value="6"/>
</dbReference>
<dbReference type="STRING" id="511145.b3191"/>
<dbReference type="ChEMBL" id="CHEMBL3309025"/>
<dbReference type="TCDB" id="3.A.1.27.3">
    <property type="family name" value="the atp-binding cassette (abc) superfamily"/>
</dbReference>
<dbReference type="jPOST" id="P64602"/>
<dbReference type="PaxDb" id="511145-b3191"/>
<dbReference type="EnsemblBacteria" id="AAC76223">
    <property type="protein sequence ID" value="AAC76223"/>
    <property type="gene ID" value="b3191"/>
</dbReference>
<dbReference type="GeneID" id="93778790"/>
<dbReference type="GeneID" id="947954"/>
<dbReference type="KEGG" id="ecj:JW5535"/>
<dbReference type="KEGG" id="eco:b3191"/>
<dbReference type="KEGG" id="ecoc:C3026_17370"/>
<dbReference type="PATRIC" id="fig|1411691.4.peg.3540"/>
<dbReference type="EchoBASE" id="EB2649"/>
<dbReference type="eggNOG" id="COG3113">
    <property type="taxonomic scope" value="Bacteria"/>
</dbReference>
<dbReference type="HOGENOM" id="CLU_115403_13_4_6"/>
<dbReference type="InParanoid" id="P64602"/>
<dbReference type="OMA" id="NPLWDAR"/>
<dbReference type="OrthoDB" id="5687860at2"/>
<dbReference type="PhylomeDB" id="P64602"/>
<dbReference type="BioCyc" id="EcoCyc:G7658-MONOMER"/>
<dbReference type="PRO" id="PR:P64602"/>
<dbReference type="Proteomes" id="UP000000625">
    <property type="component" value="Chromosome"/>
</dbReference>
<dbReference type="GO" id="GO:0005829">
    <property type="term" value="C:cytosol"/>
    <property type="evidence" value="ECO:0000314"/>
    <property type="project" value="EcoCyc"/>
</dbReference>
<dbReference type="GO" id="GO:0016020">
    <property type="term" value="C:membrane"/>
    <property type="evidence" value="ECO:0000303"/>
    <property type="project" value="ComplexPortal"/>
</dbReference>
<dbReference type="GO" id="GO:1990531">
    <property type="term" value="C:phospholipid-translocating ATPase complex"/>
    <property type="evidence" value="ECO:0000353"/>
    <property type="project" value="ComplexPortal"/>
</dbReference>
<dbReference type="GO" id="GO:0120014">
    <property type="term" value="F:phospholipid transfer activity"/>
    <property type="evidence" value="ECO:0000314"/>
    <property type="project" value="EcoCyc"/>
</dbReference>
<dbReference type="GO" id="GO:0006974">
    <property type="term" value="P:DNA damage response"/>
    <property type="evidence" value="ECO:0000315"/>
    <property type="project" value="EcoCyc"/>
</dbReference>
<dbReference type="GO" id="GO:0120010">
    <property type="term" value="P:intermembrane phospholipid transfer"/>
    <property type="evidence" value="ECO:0000314"/>
    <property type="project" value="EcoCyc"/>
</dbReference>
<dbReference type="GO" id="GO:0015914">
    <property type="term" value="P:phospholipid transport"/>
    <property type="evidence" value="ECO:0000303"/>
    <property type="project" value="ComplexPortal"/>
</dbReference>
<dbReference type="GO" id="GO:0046677">
    <property type="term" value="P:response to antibiotic"/>
    <property type="evidence" value="ECO:0000315"/>
    <property type="project" value="EcoCyc"/>
</dbReference>
<dbReference type="FunFam" id="3.30.750.24:FF:000004">
    <property type="entry name" value="Phospholipid ABC transporter-binding protein"/>
    <property type="match status" value="1"/>
</dbReference>
<dbReference type="Gene3D" id="3.30.750.24">
    <property type="entry name" value="STAS domain"/>
    <property type="match status" value="1"/>
</dbReference>
<dbReference type="InterPro" id="IPR049743">
    <property type="entry name" value="MlaB"/>
</dbReference>
<dbReference type="InterPro" id="IPR052746">
    <property type="entry name" value="MlaB_ABC_Transporter"/>
</dbReference>
<dbReference type="InterPro" id="IPR002645">
    <property type="entry name" value="STAS_dom"/>
</dbReference>
<dbReference type="InterPro" id="IPR036513">
    <property type="entry name" value="STAS_dom_sf"/>
</dbReference>
<dbReference type="NCBIfam" id="NF033618">
    <property type="entry name" value="mlaB_1"/>
    <property type="match status" value="1"/>
</dbReference>
<dbReference type="PANTHER" id="PTHR35849">
    <property type="entry name" value="BLR2341 PROTEIN"/>
    <property type="match status" value="1"/>
</dbReference>
<dbReference type="PANTHER" id="PTHR35849:SF1">
    <property type="entry name" value="INTERMEMBRANE PHOSPHOLIPID TRANSPORT SYSTEM BINDING PROTEIN MLAB"/>
    <property type="match status" value="1"/>
</dbReference>
<dbReference type="Pfam" id="PF13466">
    <property type="entry name" value="STAS_2"/>
    <property type="match status" value="1"/>
</dbReference>
<dbReference type="SUPFAM" id="SSF52091">
    <property type="entry name" value="SpoIIaa-like"/>
    <property type="match status" value="1"/>
</dbReference>
<dbReference type="PROSITE" id="PS50801">
    <property type="entry name" value="STAS"/>
    <property type="match status" value="1"/>
</dbReference>
<keyword id="KW-0002">3D-structure</keyword>
<keyword id="KW-0963">Cytoplasm</keyword>
<keyword id="KW-1185">Reference proteome</keyword>
<keyword id="KW-0813">Transport</keyword>
<organism>
    <name type="scientific">Escherichia coli (strain K12)</name>
    <dbReference type="NCBI Taxonomy" id="83333"/>
    <lineage>
        <taxon>Bacteria</taxon>
        <taxon>Pseudomonadati</taxon>
        <taxon>Pseudomonadota</taxon>
        <taxon>Gammaproteobacteria</taxon>
        <taxon>Enterobacterales</taxon>
        <taxon>Enterobacteriaceae</taxon>
        <taxon>Escherichia</taxon>
    </lineage>
</organism>
<evidence type="ECO:0000255" key="1">
    <source>
        <dbReference type="PROSITE-ProRule" id="PRU00198"/>
    </source>
</evidence>
<evidence type="ECO:0000269" key="2">
    <source>
    </source>
</evidence>
<evidence type="ECO:0000269" key="3">
    <source>
    </source>
</evidence>
<evidence type="ECO:0000269" key="4">
    <source>
    </source>
</evidence>
<evidence type="ECO:0000303" key="5">
    <source>
    </source>
</evidence>
<evidence type="ECO:0000305" key="6"/>
<evidence type="ECO:0000305" key="7">
    <source>
    </source>
</evidence>
<evidence type="ECO:0007829" key="8">
    <source>
        <dbReference type="PDB" id="6XGZ"/>
    </source>
</evidence>
<proteinExistence type="evidence at protein level"/>
<name>MLAB_ECOLI</name>
<accession>P64602</accession>
<accession>P45389</accession>
<accession>Q2M921</accession>
<gene>
    <name evidence="5" type="primary">mlaB</name>
    <name type="synonym">yrbB</name>
    <name type="ordered locus">b3191</name>
    <name type="ordered locus">JW5535</name>
</gene>
<sequence>MSESLSWMQTGDTLALSGELDQDVLLPLWEMREEAVKGITCIDLSRVSRVDTGGLALLLHLIDLAKKQGNNVTLQGVNDKVYTLAKLYNLPADVLPR</sequence>
<comment type="function">
    <text evidence="2 3">Part of the ABC transporter complex MlaFEDB, which is involved in a phospholipid transport pathway that maintains lipid asymmetry in the outer membrane by retrograde trafficking of phospholipids from the outer membrane to the inner membrane (PubMed:19383799, PubMed:27529189). MlaB plays critical roles in both the assembly and activity of the complex. May act by modulating MlaF structure and stability (PubMed:27529189).</text>
</comment>
<comment type="subunit">
    <text evidence="3 4 7">The complex is composed of two ATP-binding proteins (MlaF), two transmembrane proteins (MlaE), two cytoplasmic solute-binding proteins (MlaB) and six periplasmic solute-binding proteins (MlaD).</text>
</comment>
<comment type="subcellular location">
    <subcellularLocation>
        <location evidence="7">Cytoplasm</location>
    </subcellularLocation>
</comment>
<comment type="disruption phenotype">
    <text evidence="2">Mutation leads to accumulation of phospholipid in the outer leaflet of the outer membrane and increased outer membrane permeability. It confers sensitivity to SDS-EDTA.</text>
</comment>
<comment type="sequence caution" evidence="6">
    <conflict type="erroneous initiation">
        <sequence resource="EMBL-CDS" id="AAA57992"/>
    </conflict>
    <text>Extended N-terminus.</text>
</comment>
<reference key="1">
    <citation type="journal article" date="1997" name="Science">
        <title>The complete genome sequence of Escherichia coli K-12.</title>
        <authorList>
            <person name="Blattner F.R."/>
            <person name="Plunkett G. III"/>
            <person name="Bloch C.A."/>
            <person name="Perna N.T."/>
            <person name="Burland V."/>
            <person name="Riley M."/>
            <person name="Collado-Vides J."/>
            <person name="Glasner J.D."/>
            <person name="Rode C.K."/>
            <person name="Mayhew G.F."/>
            <person name="Gregor J."/>
            <person name="Davis N.W."/>
            <person name="Kirkpatrick H.A."/>
            <person name="Goeden M.A."/>
            <person name="Rose D.J."/>
            <person name="Mau B."/>
            <person name="Shao Y."/>
        </authorList>
    </citation>
    <scope>NUCLEOTIDE SEQUENCE [LARGE SCALE GENOMIC DNA]</scope>
    <source>
        <strain>K12 / MG1655 / ATCC 47076</strain>
    </source>
</reference>
<reference key="2">
    <citation type="journal article" date="2006" name="Mol. Syst. Biol.">
        <title>Highly accurate genome sequences of Escherichia coli K-12 strains MG1655 and W3110.</title>
        <authorList>
            <person name="Hayashi K."/>
            <person name="Morooka N."/>
            <person name="Yamamoto Y."/>
            <person name="Fujita K."/>
            <person name="Isono K."/>
            <person name="Choi S."/>
            <person name="Ohtsubo E."/>
            <person name="Baba T."/>
            <person name="Wanner B.L."/>
            <person name="Mori H."/>
            <person name="Horiuchi T."/>
        </authorList>
    </citation>
    <scope>NUCLEOTIDE SEQUENCE [LARGE SCALE GENOMIC DNA]</scope>
    <source>
        <strain>K12 / W3110 / ATCC 27325 / DSM 5911</strain>
    </source>
</reference>
<reference key="3">
    <citation type="journal article" date="2009" name="Proc. Natl. Acad. Sci. U.S.A.">
        <title>An ABC transport system that maintains lipid asymmetry in the gram-negative outer membrane.</title>
        <authorList>
            <person name="Malinverni J.C."/>
            <person name="Silhavy T.J."/>
        </authorList>
    </citation>
    <scope>FUNCTION IN PHOSPHOLIPID TRANSPORT</scope>
    <scope>SUBUNIT</scope>
    <scope>SUBCELLULAR LOCATION</scope>
    <scope>DISRUPTION PHENOTYPE</scope>
    <source>
        <strain>K12 / MC4100 / JA176</strain>
    </source>
</reference>
<reference key="4">
    <citation type="journal article" date="2016" name="Elife">
        <title>Defining key roles for auxiliary proteins in an ABC transporter that maintains bacterial outer membrane lipid asymmetry.</title>
        <authorList>
            <person name="Thong S."/>
            <person name="Ercan B."/>
            <person name="Torta F."/>
            <person name="Fong Z.Y."/>
            <person name="Wong H.Y."/>
            <person name="Wenk M.R."/>
            <person name="Chng S.S."/>
        </authorList>
    </citation>
    <scope>FUNCTION</scope>
    <scope>SUBUNIT</scope>
    <scope>MUTAGENESIS OF THR-52</scope>
    <source>
        <strain>K12</strain>
    </source>
</reference>
<reference key="5">
    <citation type="journal article" date="2017" name="Cell">
        <title>Architectures of lipid transport systems for the bacterial outer membrane.</title>
        <authorList>
            <person name="Ekiert D.C."/>
            <person name="Bhabha G."/>
            <person name="Isom G.L."/>
            <person name="Greenan G."/>
            <person name="Ovchinnikov S."/>
            <person name="Henderson I.R."/>
            <person name="Cox J.S."/>
            <person name="Vale R.D."/>
        </authorList>
    </citation>
    <scope>IDENTIFICATION BY MASS SPECTROMETRY</scope>
    <scope>SUBUNIT</scope>
    <source>
        <strain>K12</strain>
    </source>
</reference>
<feature type="chain" id="PRO_0000169462" description="Intermembrane phospholipid transport system binding protein MlaB">
    <location>
        <begin position="1"/>
        <end position="97"/>
    </location>
</feature>
<feature type="domain" description="STAS" evidence="1">
    <location>
        <begin position="1"/>
        <end position="97"/>
    </location>
</feature>
<feature type="mutagenesis site" description="Does not affect the assembly of the MlaFEB complex, but abolishes ATPase activity." evidence="3">
    <original>T</original>
    <variation>A</variation>
    <location>
        <position position="52"/>
    </location>
</feature>
<feature type="strand" evidence="8">
    <location>
        <begin position="3"/>
        <end position="10"/>
    </location>
</feature>
<feature type="strand" evidence="8">
    <location>
        <begin position="13"/>
        <end position="20"/>
    </location>
</feature>
<feature type="turn" evidence="8">
    <location>
        <begin position="22"/>
        <end position="24"/>
    </location>
</feature>
<feature type="helix" evidence="8">
    <location>
        <begin position="26"/>
        <end position="30"/>
    </location>
</feature>
<feature type="helix" evidence="8">
    <location>
        <begin position="32"/>
        <end position="35"/>
    </location>
</feature>
<feature type="turn" evidence="8">
    <location>
        <begin position="36"/>
        <end position="38"/>
    </location>
</feature>
<feature type="strand" evidence="8">
    <location>
        <begin position="41"/>
        <end position="50"/>
    </location>
</feature>
<feature type="helix" evidence="8">
    <location>
        <begin position="52"/>
        <end position="67"/>
    </location>
</feature>
<feature type="strand" evidence="8">
    <location>
        <begin position="73"/>
        <end position="76"/>
    </location>
</feature>
<feature type="helix" evidence="8">
    <location>
        <begin position="79"/>
        <end position="87"/>
    </location>
</feature>
<feature type="turn" evidence="8">
    <location>
        <begin position="92"/>
        <end position="94"/>
    </location>
</feature>
<protein>
    <recommendedName>
        <fullName evidence="6">Intermembrane phospholipid transport system binding protein MlaB</fullName>
    </recommendedName>
</protein>